<evidence type="ECO:0000256" key="1">
    <source>
        <dbReference type="SAM" id="MobiDB-lite"/>
    </source>
</evidence>
<evidence type="ECO:0000269" key="2">
    <source>
    </source>
</evidence>
<evidence type="ECO:0000269" key="3">
    <source>
    </source>
</evidence>
<evidence type="ECO:0000303" key="4">
    <source>
    </source>
</evidence>
<evidence type="ECO:0000303" key="5">
    <source>
    </source>
</evidence>
<evidence type="ECO:0000303" key="6">
    <source>
    </source>
</evidence>
<evidence type="ECO:0000303" key="7">
    <source>
    </source>
</evidence>
<evidence type="ECO:0000303" key="8">
    <source ref="4"/>
</evidence>
<evidence type="ECO:0000305" key="9"/>
<evidence type="ECO:0007744" key="10">
    <source>
    </source>
</evidence>
<sequence length="1325" mass="148089">MKEPLDGECGKAVVPQQELLDKIKEEPDNAQEYGCVQQPKTQESKLKIGGVSSVNERPIAQQLNPGFQLSFASSGPSVLLPSVPAVAIKVFCSGCKKMLYKGQTAYHKTGSTQLFCSTRCITRHSSPACLPPPPKKTCTNCSKDILNPKDVITTRFENSYPSKDFCSQSCLSSYELKKKPVVTIYTKSISTKCSMCQKNADTRFEVKYQNVVHGLCSDACFSKFHSTNNLTMNCCENCGSYCYSSSGPCQSQKVFSSTSVTAYKQNSAQIPPYALGKSLRPSAEMIETTNDSGKTELFCSINCLSAYRVKTVTSSGVQVSCHSCKTSAIPQYHLAMSNGTIYSFCSSSCVVAFQNVFSKPKGTNSSAVPLSQGQVVVSPPSSRSAVSIGGGNTSAVSPSSIRGSAAASLQPLAEQSQQVALTHTVVKLKCQHCNHLFATKPELLFYKGKMFLFCGKNCSDEYKKKNKVVAMCDYCKLQKIIKETVRFSGVDKPFCSEVCKFLSARDFGERWGNYCKMCSYCSQTSPNLVENRLEGKLEEFCCEDCMSKFTVLFYQMAKCDGCKRQGKLSESIKWRGNIKHFCNLFCVLEFCHQQIMNDCLPQNKVNISKAKTAVTELPSARTDTTPVITSVMSLAKIPATLSTGNTNSVLKGAVTKEAAKIIQDESTQEDAMKFPSSQSSQPSRLLKNKGISCKPVTQTKATSCKPHTQHKECQTDLPMPNEKNDAELDSPPSKKKRLGFFQTYDTEYLKVGFIICPGSKESSPRPQCVICGEILSSENMKPANLSHHLKTKHSELENKPVDFFEQKSLEMECQNSSLKKCLLVEKSLVKASYLIAFQTAASKKPFSIAEELIKPYLVEMCSEVLGSSAGDKMKTIPLSNVTIQHRIDELSADIEDQLIQKVRESKWFALQIDESSEISNITLLLCYIRFIDYDCRDVKEELLFCIEMPTQITGFEIFELINKYIDSKSLNWKHCVGLCTDGAASMTGRYSGLKAKIQEVAMNTAAFTHCFIHRERLVAEKLSPCLHKILLQSAQILSFIKSNALNSRMLTILCEEMGSEHVSLPLHAEVRWISRGRMLKRLFELRHEIEIFLSQKHSDLAKYFHDEEWVGKLAYLSDIFSLINELNLSLQGTLTTFFNLCNKIDVFKRKLKMWLKRTQENDYDMFPSFSEFSNSSGLNMTDITRIIFEHLEGLSQVFSDCFPPEQDLRSGNLWIIHPFMNHQNNNLTDFEEEKLTELSSDLGLQALFKSVSVTQFWINAKTSYPELHERAMKFLLPFSTVYLCDAAFSALTESKQKNLLGSGPALRLAVTSLIPRIEKLVKEKE</sequence>
<accession>O95789</accession>
<accession>B4DRJ6</accession>
<accession>Q32Q23</accession>
<accession>Q4G108</accession>
<accession>Q5SVZ9</accession>
<accession>Q5SW00</accession>
<accession>Q69YL4</accession>
<accession>Q96IY0</accession>
<accession>Q9NWF1</accession>
<accession>Q9P2J4</accession>
<organism>
    <name type="scientific">Homo sapiens</name>
    <name type="common">Human</name>
    <dbReference type="NCBI Taxonomy" id="9606"/>
    <lineage>
        <taxon>Eukaryota</taxon>
        <taxon>Metazoa</taxon>
        <taxon>Chordata</taxon>
        <taxon>Craniata</taxon>
        <taxon>Vertebrata</taxon>
        <taxon>Euteleostomi</taxon>
        <taxon>Mammalia</taxon>
        <taxon>Eutheria</taxon>
        <taxon>Euarchontoglires</taxon>
        <taxon>Primates</taxon>
        <taxon>Haplorrhini</taxon>
        <taxon>Catarrhini</taxon>
        <taxon>Hominidae</taxon>
        <taxon>Homo</taxon>
    </lineage>
</organism>
<reference key="1">
    <citation type="journal article" date="1999" name="Genomics">
        <title>Cloning and mapping of members of the MYM family.</title>
        <authorList>
            <person name="Smedley D."/>
            <person name="Hamoudi R."/>
            <person name="Lu Y.-J."/>
            <person name="Cooper C."/>
            <person name="Shipley J."/>
        </authorList>
    </citation>
    <scope>NUCLEOTIDE SEQUENCE [MRNA] (ISOFORM 1)</scope>
    <scope>TISSUE SPECIFICITY</scope>
</reference>
<reference key="2">
    <citation type="journal article" date="2000" name="DNA Res.">
        <title>Prediction of the coding sequences of unidentified human genes. XVI. The complete sequences of 150 new cDNA clones from brain which code for large proteins in vitro.</title>
        <authorList>
            <person name="Nagase T."/>
            <person name="Kikuno R."/>
            <person name="Ishikawa K."/>
            <person name="Hirosawa M."/>
            <person name="Ohara O."/>
        </authorList>
    </citation>
    <scope>NUCLEOTIDE SEQUENCE [LARGE SCALE MRNA] (ISOFORM 5)</scope>
    <source>
        <tissue>Brain</tissue>
    </source>
</reference>
<reference key="3">
    <citation type="journal article" date="2004" name="Nat. Genet.">
        <title>Complete sequencing and characterization of 21,243 full-length human cDNAs.</title>
        <authorList>
            <person name="Ota T."/>
            <person name="Suzuki Y."/>
            <person name="Nishikawa T."/>
            <person name="Otsuki T."/>
            <person name="Sugiyama T."/>
            <person name="Irie R."/>
            <person name="Wakamatsu A."/>
            <person name="Hayashi K."/>
            <person name="Sato H."/>
            <person name="Nagai K."/>
            <person name="Kimura K."/>
            <person name="Makita H."/>
            <person name="Sekine M."/>
            <person name="Obayashi M."/>
            <person name="Nishi T."/>
            <person name="Shibahara T."/>
            <person name="Tanaka T."/>
            <person name="Ishii S."/>
            <person name="Yamamoto J."/>
            <person name="Saito K."/>
            <person name="Kawai Y."/>
            <person name="Isono Y."/>
            <person name="Nakamura Y."/>
            <person name="Nagahari K."/>
            <person name="Murakami K."/>
            <person name="Yasuda T."/>
            <person name="Iwayanagi T."/>
            <person name="Wagatsuma M."/>
            <person name="Shiratori A."/>
            <person name="Sudo H."/>
            <person name="Hosoiri T."/>
            <person name="Kaku Y."/>
            <person name="Kodaira H."/>
            <person name="Kondo H."/>
            <person name="Sugawara M."/>
            <person name="Takahashi M."/>
            <person name="Kanda K."/>
            <person name="Yokoi T."/>
            <person name="Furuya T."/>
            <person name="Kikkawa E."/>
            <person name="Omura Y."/>
            <person name="Abe K."/>
            <person name="Kamihara K."/>
            <person name="Katsuta N."/>
            <person name="Sato K."/>
            <person name="Tanikawa M."/>
            <person name="Yamazaki M."/>
            <person name="Ninomiya K."/>
            <person name="Ishibashi T."/>
            <person name="Yamashita H."/>
            <person name="Murakawa K."/>
            <person name="Fujimori K."/>
            <person name="Tanai H."/>
            <person name="Kimata M."/>
            <person name="Watanabe M."/>
            <person name="Hiraoka S."/>
            <person name="Chiba Y."/>
            <person name="Ishida S."/>
            <person name="Ono Y."/>
            <person name="Takiguchi S."/>
            <person name="Watanabe S."/>
            <person name="Yosida M."/>
            <person name="Hotuta T."/>
            <person name="Kusano J."/>
            <person name="Kanehori K."/>
            <person name="Takahashi-Fujii A."/>
            <person name="Hara H."/>
            <person name="Tanase T.-O."/>
            <person name="Nomura Y."/>
            <person name="Togiya S."/>
            <person name="Komai F."/>
            <person name="Hara R."/>
            <person name="Takeuchi K."/>
            <person name="Arita M."/>
            <person name="Imose N."/>
            <person name="Musashino K."/>
            <person name="Yuuki H."/>
            <person name="Oshima A."/>
            <person name="Sasaki N."/>
            <person name="Aotsuka S."/>
            <person name="Yoshikawa Y."/>
            <person name="Matsunawa H."/>
            <person name="Ichihara T."/>
            <person name="Shiohata N."/>
            <person name="Sano S."/>
            <person name="Moriya S."/>
            <person name="Momiyama H."/>
            <person name="Satoh N."/>
            <person name="Takami S."/>
            <person name="Terashima Y."/>
            <person name="Suzuki O."/>
            <person name="Nakagawa S."/>
            <person name="Senoh A."/>
            <person name="Mizoguchi H."/>
            <person name="Goto Y."/>
            <person name="Shimizu F."/>
            <person name="Wakebe H."/>
            <person name="Hishigaki H."/>
            <person name="Watanabe T."/>
            <person name="Sugiyama A."/>
            <person name="Takemoto M."/>
            <person name="Kawakami B."/>
            <person name="Yamazaki M."/>
            <person name="Watanabe K."/>
            <person name="Kumagai A."/>
            <person name="Itakura S."/>
            <person name="Fukuzumi Y."/>
            <person name="Fujimori Y."/>
            <person name="Komiyama M."/>
            <person name="Tashiro H."/>
            <person name="Tanigami A."/>
            <person name="Fujiwara T."/>
            <person name="Ono T."/>
            <person name="Yamada K."/>
            <person name="Fujii Y."/>
            <person name="Ozaki K."/>
            <person name="Hirao M."/>
            <person name="Ohmori Y."/>
            <person name="Kawabata A."/>
            <person name="Hikiji T."/>
            <person name="Kobatake N."/>
            <person name="Inagaki H."/>
            <person name="Ikema Y."/>
            <person name="Okamoto S."/>
            <person name="Okitani R."/>
            <person name="Kawakami T."/>
            <person name="Noguchi S."/>
            <person name="Itoh T."/>
            <person name="Shigeta K."/>
            <person name="Senba T."/>
            <person name="Matsumura K."/>
            <person name="Nakajima Y."/>
            <person name="Mizuno T."/>
            <person name="Morinaga M."/>
            <person name="Sasaki M."/>
            <person name="Togashi T."/>
            <person name="Oyama M."/>
            <person name="Hata H."/>
            <person name="Watanabe M."/>
            <person name="Komatsu T."/>
            <person name="Mizushima-Sugano J."/>
            <person name="Satoh T."/>
            <person name="Shirai Y."/>
            <person name="Takahashi Y."/>
            <person name="Nakagawa K."/>
            <person name="Okumura K."/>
            <person name="Nagase T."/>
            <person name="Nomura N."/>
            <person name="Kikuchi H."/>
            <person name="Masuho Y."/>
            <person name="Yamashita R."/>
            <person name="Nakai K."/>
            <person name="Yada T."/>
            <person name="Nakamura Y."/>
            <person name="Ohara O."/>
            <person name="Isogai T."/>
            <person name="Sugano S."/>
        </authorList>
    </citation>
    <scope>NUCLEOTIDE SEQUENCE [LARGE SCALE MRNA] (ISOFORM 3)</scope>
</reference>
<reference key="4">
    <citation type="submission" date="2003-05" db="EMBL/GenBank/DDBJ databases">
        <title>Cloning of human full-length CDSs in BD Creator(TM) system donor vector.</title>
        <authorList>
            <person name="Kalnine N."/>
            <person name="Chen X."/>
            <person name="Rolfs A."/>
            <person name="Halleck A."/>
            <person name="Hines L."/>
            <person name="Eisenstein S."/>
            <person name="Koundinya M."/>
            <person name="Raphael J."/>
            <person name="Moreira D."/>
            <person name="Kelley T."/>
            <person name="LaBaer J."/>
            <person name="Lin Y."/>
            <person name="Phelan M."/>
            <person name="Farmer A."/>
        </authorList>
    </citation>
    <scope>NUCLEOTIDE SEQUENCE [LARGE SCALE MRNA] (ISOFORM 2)</scope>
</reference>
<reference key="5">
    <citation type="journal article" date="2007" name="BMC Genomics">
        <title>The full-ORF clone resource of the German cDNA consortium.</title>
        <authorList>
            <person name="Bechtel S."/>
            <person name="Rosenfelder H."/>
            <person name="Duda A."/>
            <person name="Schmidt C.P."/>
            <person name="Ernst U."/>
            <person name="Wellenreuther R."/>
            <person name="Mehrle A."/>
            <person name="Schuster C."/>
            <person name="Bahr A."/>
            <person name="Bloecker H."/>
            <person name="Heubner D."/>
            <person name="Hoerlein A."/>
            <person name="Michel G."/>
            <person name="Wedler H."/>
            <person name="Koehrer K."/>
            <person name="Ottenwaelder B."/>
            <person name="Poustka A."/>
            <person name="Wiemann S."/>
            <person name="Schupp I."/>
        </authorList>
    </citation>
    <scope>NUCLEOTIDE SEQUENCE [LARGE SCALE MRNA] (ISOFORM 4)</scope>
    <source>
        <tissue>Melanoma</tissue>
    </source>
</reference>
<reference key="6">
    <citation type="journal article" date="2006" name="Nature">
        <title>The DNA sequence and biological annotation of human chromosome 1.</title>
        <authorList>
            <person name="Gregory S.G."/>
            <person name="Barlow K.F."/>
            <person name="McLay K.E."/>
            <person name="Kaul R."/>
            <person name="Swarbreck D."/>
            <person name="Dunham A."/>
            <person name="Scott C.E."/>
            <person name="Howe K.L."/>
            <person name="Woodfine K."/>
            <person name="Spencer C.C.A."/>
            <person name="Jones M.C."/>
            <person name="Gillson C."/>
            <person name="Searle S."/>
            <person name="Zhou Y."/>
            <person name="Kokocinski F."/>
            <person name="McDonald L."/>
            <person name="Evans R."/>
            <person name="Phillips K."/>
            <person name="Atkinson A."/>
            <person name="Cooper R."/>
            <person name="Jones C."/>
            <person name="Hall R.E."/>
            <person name="Andrews T.D."/>
            <person name="Lloyd C."/>
            <person name="Ainscough R."/>
            <person name="Almeida J.P."/>
            <person name="Ambrose K.D."/>
            <person name="Anderson F."/>
            <person name="Andrew R.W."/>
            <person name="Ashwell R.I.S."/>
            <person name="Aubin K."/>
            <person name="Babbage A.K."/>
            <person name="Bagguley C.L."/>
            <person name="Bailey J."/>
            <person name="Beasley H."/>
            <person name="Bethel G."/>
            <person name="Bird C.P."/>
            <person name="Bray-Allen S."/>
            <person name="Brown J.Y."/>
            <person name="Brown A.J."/>
            <person name="Buckley D."/>
            <person name="Burton J."/>
            <person name="Bye J."/>
            <person name="Carder C."/>
            <person name="Chapman J.C."/>
            <person name="Clark S.Y."/>
            <person name="Clarke G."/>
            <person name="Clee C."/>
            <person name="Cobley V."/>
            <person name="Collier R.E."/>
            <person name="Corby N."/>
            <person name="Coville G.J."/>
            <person name="Davies J."/>
            <person name="Deadman R."/>
            <person name="Dunn M."/>
            <person name="Earthrowl M."/>
            <person name="Ellington A.G."/>
            <person name="Errington H."/>
            <person name="Frankish A."/>
            <person name="Frankland J."/>
            <person name="French L."/>
            <person name="Garner P."/>
            <person name="Garnett J."/>
            <person name="Gay L."/>
            <person name="Ghori M.R.J."/>
            <person name="Gibson R."/>
            <person name="Gilby L.M."/>
            <person name="Gillett W."/>
            <person name="Glithero R.J."/>
            <person name="Grafham D.V."/>
            <person name="Griffiths C."/>
            <person name="Griffiths-Jones S."/>
            <person name="Grocock R."/>
            <person name="Hammond S."/>
            <person name="Harrison E.S.I."/>
            <person name="Hart E."/>
            <person name="Haugen E."/>
            <person name="Heath P.D."/>
            <person name="Holmes S."/>
            <person name="Holt K."/>
            <person name="Howden P.J."/>
            <person name="Hunt A.R."/>
            <person name="Hunt S.E."/>
            <person name="Hunter G."/>
            <person name="Isherwood J."/>
            <person name="James R."/>
            <person name="Johnson C."/>
            <person name="Johnson D."/>
            <person name="Joy A."/>
            <person name="Kay M."/>
            <person name="Kershaw J.K."/>
            <person name="Kibukawa M."/>
            <person name="Kimberley A.M."/>
            <person name="King A."/>
            <person name="Knights A.J."/>
            <person name="Lad H."/>
            <person name="Laird G."/>
            <person name="Lawlor S."/>
            <person name="Leongamornlert D.A."/>
            <person name="Lloyd D.M."/>
            <person name="Loveland J."/>
            <person name="Lovell J."/>
            <person name="Lush M.J."/>
            <person name="Lyne R."/>
            <person name="Martin S."/>
            <person name="Mashreghi-Mohammadi M."/>
            <person name="Matthews L."/>
            <person name="Matthews N.S.W."/>
            <person name="McLaren S."/>
            <person name="Milne S."/>
            <person name="Mistry S."/>
            <person name="Moore M.J.F."/>
            <person name="Nickerson T."/>
            <person name="O'Dell C.N."/>
            <person name="Oliver K."/>
            <person name="Palmeiri A."/>
            <person name="Palmer S.A."/>
            <person name="Parker A."/>
            <person name="Patel D."/>
            <person name="Pearce A.V."/>
            <person name="Peck A.I."/>
            <person name="Pelan S."/>
            <person name="Phelps K."/>
            <person name="Phillimore B.J."/>
            <person name="Plumb R."/>
            <person name="Rajan J."/>
            <person name="Raymond C."/>
            <person name="Rouse G."/>
            <person name="Saenphimmachak C."/>
            <person name="Sehra H.K."/>
            <person name="Sheridan E."/>
            <person name="Shownkeen R."/>
            <person name="Sims S."/>
            <person name="Skuce C.D."/>
            <person name="Smith M."/>
            <person name="Steward C."/>
            <person name="Subramanian S."/>
            <person name="Sycamore N."/>
            <person name="Tracey A."/>
            <person name="Tromans A."/>
            <person name="Van Helmond Z."/>
            <person name="Wall M."/>
            <person name="Wallis J.M."/>
            <person name="White S."/>
            <person name="Whitehead S.L."/>
            <person name="Wilkinson J.E."/>
            <person name="Willey D.L."/>
            <person name="Williams H."/>
            <person name="Wilming L."/>
            <person name="Wray P.W."/>
            <person name="Wu Z."/>
            <person name="Coulson A."/>
            <person name="Vaudin M."/>
            <person name="Sulston J.E."/>
            <person name="Durbin R.M."/>
            <person name="Hubbard T."/>
            <person name="Wooster R."/>
            <person name="Dunham I."/>
            <person name="Carter N.P."/>
            <person name="McVean G."/>
            <person name="Ross M.T."/>
            <person name="Harrow J."/>
            <person name="Olson M.V."/>
            <person name="Beck S."/>
            <person name="Rogers J."/>
            <person name="Bentley D.R."/>
        </authorList>
    </citation>
    <scope>NUCLEOTIDE SEQUENCE [LARGE SCALE GENOMIC DNA]</scope>
</reference>
<reference key="7">
    <citation type="journal article" date="2004" name="Genome Res.">
        <title>The status, quality, and expansion of the NIH full-length cDNA project: the Mammalian Gene Collection (MGC).</title>
        <authorList>
            <consortium name="The MGC Project Team"/>
        </authorList>
    </citation>
    <scope>NUCLEOTIDE SEQUENCE [LARGE SCALE MRNA] (ISOFORM 4)</scope>
    <scope>NUCLEOTIDE SEQUENCE [LARGE SCALE MRNA] OF 1-970 (ISOFORM 3)</scope>
    <source>
        <tissue>Brain</tissue>
        <tissue>Testis</tissue>
    </source>
</reference>
<reference key="8">
    <citation type="journal article" date="2011" name="BMC Biol.">
        <title>Identification and characterization of a set of conserved and new regulators of cytoskeletal organisation, cell morphology and migration.</title>
        <authorList>
            <person name="Bai S.W."/>
            <person name="Herrera-Abreu M.T."/>
            <person name="Rohn J.L."/>
            <person name="Racine V."/>
            <person name="Tajadura V."/>
            <person name="Suryavanshi N."/>
            <person name="Bechtel S."/>
            <person name="Wiemann S."/>
            <person name="Baum B."/>
            <person name="Ridley A.J."/>
        </authorList>
    </citation>
    <scope>FUNCTION</scope>
</reference>
<reference key="9">
    <citation type="journal article" date="2013" name="J. Proteome Res.">
        <title>Toward a comprehensive characterization of a human cancer cell phosphoproteome.</title>
        <authorList>
            <person name="Zhou H."/>
            <person name="Di Palma S."/>
            <person name="Preisinger C."/>
            <person name="Peng M."/>
            <person name="Polat A.N."/>
            <person name="Heck A.J."/>
            <person name="Mohammed S."/>
        </authorList>
    </citation>
    <scope>PHOSPHORYLATION [LARGE SCALE ANALYSIS] AT SER-397</scope>
    <scope>IDENTIFICATION BY MASS SPECTROMETRY [LARGE SCALE ANALYSIS]</scope>
    <source>
        <tissue>Erythroleukemia</tissue>
    </source>
</reference>
<dbReference type="EMBL" id="AF055470">
    <property type="protein sequence ID" value="AAD15797.1"/>
    <property type="molecule type" value="mRNA"/>
</dbReference>
<dbReference type="EMBL" id="AB037774">
    <property type="protein sequence ID" value="BAA92591.1"/>
    <property type="status" value="ALT_INIT"/>
    <property type="molecule type" value="mRNA"/>
</dbReference>
<dbReference type="EMBL" id="AK299293">
    <property type="protein sequence ID" value="BAG61308.1"/>
    <property type="molecule type" value="mRNA"/>
</dbReference>
<dbReference type="EMBL" id="BT007117">
    <property type="protein sequence ID" value="AAP35781.1"/>
    <property type="molecule type" value="mRNA"/>
</dbReference>
<dbReference type="EMBL" id="AL832911">
    <property type="protein sequence ID" value="CAH10638.1"/>
    <property type="molecule type" value="mRNA"/>
</dbReference>
<dbReference type="EMBL" id="AC114490">
    <property type="status" value="NOT_ANNOTATED_CDS"/>
    <property type="molecule type" value="Genomic_DNA"/>
</dbReference>
<dbReference type="EMBL" id="AL607089">
    <property type="status" value="NOT_ANNOTATED_CDS"/>
    <property type="molecule type" value="Genomic_DNA"/>
</dbReference>
<dbReference type="EMBL" id="BC033903">
    <property type="protein sequence ID" value="AAH33903.1"/>
    <property type="status" value="ALT_SEQ"/>
    <property type="molecule type" value="mRNA"/>
</dbReference>
<dbReference type="EMBL" id="BC068534">
    <property type="protein sequence ID" value="AAH68534.1"/>
    <property type="molecule type" value="mRNA"/>
</dbReference>
<dbReference type="EMBL" id="BC107880">
    <property type="protein sequence ID" value="AAI07881.1"/>
    <property type="status" value="ALT_SEQ"/>
    <property type="molecule type" value="mRNA"/>
</dbReference>
<dbReference type="EMBL" id="BC117463">
    <property type="protein sequence ID" value="AAI17464.1"/>
    <property type="molecule type" value="mRNA"/>
</dbReference>
<dbReference type="CCDS" id="CCDS387.2">
    <molecule id="O95789-3"/>
</dbReference>
<dbReference type="RefSeq" id="NP_009098.3">
    <molecule id="O95789-3"/>
    <property type="nucleotide sequence ID" value="NM_007167.4"/>
</dbReference>
<dbReference type="BioGRID" id="114638">
    <property type="interactions" value="85"/>
</dbReference>
<dbReference type="FunCoup" id="O95789">
    <property type="interactions" value="1981"/>
</dbReference>
<dbReference type="IntAct" id="O95789">
    <property type="interactions" value="87"/>
</dbReference>
<dbReference type="STRING" id="9606.ENSP00000349708"/>
<dbReference type="GlyCosmos" id="O95789">
    <property type="glycosylation" value="1 site, 1 glycan"/>
</dbReference>
<dbReference type="GlyGen" id="O95789">
    <property type="glycosylation" value="7 sites, 1 N-linked glycan (1 site), 1 O-linked glycan (6 sites)"/>
</dbReference>
<dbReference type="iPTMnet" id="O95789"/>
<dbReference type="PhosphoSitePlus" id="O95789"/>
<dbReference type="BioMuta" id="ZMYM6"/>
<dbReference type="jPOST" id="O95789"/>
<dbReference type="MassIVE" id="O95789"/>
<dbReference type="PaxDb" id="9606-ENSP00000349708"/>
<dbReference type="PeptideAtlas" id="O95789"/>
<dbReference type="ProteomicsDB" id="51049">
    <molecule id="O95789-3"/>
</dbReference>
<dbReference type="ProteomicsDB" id="51050">
    <molecule id="O95789-1"/>
</dbReference>
<dbReference type="ProteomicsDB" id="51051">
    <molecule id="O95789-2"/>
</dbReference>
<dbReference type="ProteomicsDB" id="51052">
    <molecule id="O95789-4"/>
</dbReference>
<dbReference type="ProteomicsDB" id="51053">
    <molecule id="O95789-5"/>
</dbReference>
<dbReference type="Antibodypedia" id="2613">
    <property type="antibodies" value="90 antibodies from 16 providers"/>
</dbReference>
<dbReference type="DNASU" id="9204"/>
<dbReference type="Ensembl" id="ENST00000317538.9">
    <molecule id="O95789-4"/>
    <property type="protein sequence ID" value="ENSP00000326695.5"/>
    <property type="gene ID" value="ENSG00000163867.17"/>
</dbReference>
<dbReference type="Ensembl" id="ENST00000357182.9">
    <molecule id="O95789-3"/>
    <property type="protein sequence ID" value="ENSP00000349708.4"/>
    <property type="gene ID" value="ENSG00000163867.17"/>
</dbReference>
<dbReference type="Ensembl" id="ENST00000373333.1">
    <molecule id="O95789-4"/>
    <property type="protein sequence ID" value="ENSP00000362430.1"/>
    <property type="gene ID" value="ENSG00000163867.17"/>
</dbReference>
<dbReference type="GeneID" id="9204"/>
<dbReference type="KEGG" id="hsa:9204"/>
<dbReference type="MANE-Select" id="ENST00000357182.9">
    <property type="protein sequence ID" value="ENSP00000349708.4"/>
    <property type="RefSeq nucleotide sequence ID" value="NM_007167.4"/>
    <property type="RefSeq protein sequence ID" value="NP_009098.3"/>
</dbReference>
<dbReference type="UCSC" id="uc001byh.4">
    <molecule id="O95789-3"/>
    <property type="organism name" value="human"/>
</dbReference>
<dbReference type="AGR" id="HGNC:13050"/>
<dbReference type="CTD" id="9204"/>
<dbReference type="DisGeNET" id="9204"/>
<dbReference type="GeneCards" id="ZMYM6"/>
<dbReference type="HGNC" id="HGNC:13050">
    <property type="gene designation" value="ZMYM6"/>
</dbReference>
<dbReference type="HPA" id="ENSG00000163867">
    <property type="expression patterns" value="Low tissue specificity"/>
</dbReference>
<dbReference type="MIM" id="613567">
    <property type="type" value="gene"/>
</dbReference>
<dbReference type="neXtProt" id="NX_O95789"/>
<dbReference type="OpenTargets" id="ENSG00000163867"/>
<dbReference type="PharmGKB" id="PA37628"/>
<dbReference type="VEuPathDB" id="HostDB:ENSG00000163867"/>
<dbReference type="eggNOG" id="ENOG502QT83">
    <property type="taxonomic scope" value="Eukaryota"/>
</dbReference>
<dbReference type="GeneTree" id="ENSGT00940000162386"/>
<dbReference type="HOGENOM" id="CLU_265906_0_0_1"/>
<dbReference type="InParanoid" id="O95789"/>
<dbReference type="OMA" id="NIMAPCE"/>
<dbReference type="OrthoDB" id="10025028at2759"/>
<dbReference type="PAN-GO" id="O95789">
    <property type="GO annotations" value="0 GO annotations based on evolutionary models"/>
</dbReference>
<dbReference type="PhylomeDB" id="O95789"/>
<dbReference type="TreeFam" id="TF336988"/>
<dbReference type="PathwayCommons" id="O95789"/>
<dbReference type="SignaLink" id="O95789"/>
<dbReference type="BioGRID-ORCS" id="9204">
    <property type="hits" value="9 hits in 1128 CRISPR screens"/>
</dbReference>
<dbReference type="ChiTaRS" id="ZMYM6">
    <property type="organism name" value="human"/>
</dbReference>
<dbReference type="GenomeRNAi" id="9204"/>
<dbReference type="Pharos" id="O95789">
    <property type="development level" value="Tbio"/>
</dbReference>
<dbReference type="PRO" id="PR:O95789"/>
<dbReference type="Proteomes" id="UP000005640">
    <property type="component" value="Chromosome 1"/>
</dbReference>
<dbReference type="RNAct" id="O95789">
    <property type="molecule type" value="protein"/>
</dbReference>
<dbReference type="Bgee" id="ENSG00000163867">
    <property type="expression patterns" value="Expressed in monocyte and 153 other cell types or tissues"/>
</dbReference>
<dbReference type="ExpressionAtlas" id="O95789">
    <property type="expression patterns" value="baseline and differential"/>
</dbReference>
<dbReference type="GO" id="GO:0005634">
    <property type="term" value="C:nucleus"/>
    <property type="evidence" value="ECO:0007669"/>
    <property type="project" value="UniProtKB-SubCell"/>
</dbReference>
<dbReference type="GO" id="GO:0003677">
    <property type="term" value="F:DNA binding"/>
    <property type="evidence" value="ECO:0000304"/>
    <property type="project" value="ProtInc"/>
</dbReference>
<dbReference type="GO" id="GO:0008270">
    <property type="term" value="F:zinc ion binding"/>
    <property type="evidence" value="ECO:0007669"/>
    <property type="project" value="UniProtKB-KW"/>
</dbReference>
<dbReference type="GO" id="GO:0007010">
    <property type="term" value="P:cytoskeleton organization"/>
    <property type="evidence" value="ECO:0000315"/>
    <property type="project" value="UniProtKB"/>
</dbReference>
<dbReference type="GO" id="GO:0022604">
    <property type="term" value="P:regulation of cell morphogenesis"/>
    <property type="evidence" value="ECO:0000315"/>
    <property type="project" value="UniProtKB"/>
</dbReference>
<dbReference type="InterPro" id="IPR012337">
    <property type="entry name" value="RNaseH-like_sf"/>
</dbReference>
<dbReference type="InterPro" id="IPR011017">
    <property type="entry name" value="TRASH_dom"/>
</dbReference>
<dbReference type="InterPro" id="IPR010507">
    <property type="entry name" value="Znf_MYM"/>
</dbReference>
<dbReference type="InterPro" id="IPR051284">
    <property type="entry name" value="ZnF_MYMT-QRICH1"/>
</dbReference>
<dbReference type="PANTHER" id="PTHR45736">
    <property type="entry name" value="ZINC FINGER MYM-TYPE PROTEIN"/>
    <property type="match status" value="1"/>
</dbReference>
<dbReference type="PANTHER" id="PTHR45736:SF9">
    <property type="entry name" value="ZINC FINGER MYM-TYPE PROTEIN 6"/>
    <property type="match status" value="1"/>
</dbReference>
<dbReference type="Pfam" id="PF24900">
    <property type="entry name" value="TRASH_ZMYM4"/>
    <property type="match status" value="1"/>
</dbReference>
<dbReference type="Pfam" id="PF06467">
    <property type="entry name" value="zf-FCS"/>
    <property type="match status" value="4"/>
</dbReference>
<dbReference type="SMART" id="SM00746">
    <property type="entry name" value="TRASH"/>
    <property type="match status" value="9"/>
</dbReference>
<dbReference type="SUPFAM" id="SSF57716">
    <property type="entry name" value="Glucocorticoid receptor-like (DNA-binding domain)"/>
    <property type="match status" value="1"/>
</dbReference>
<dbReference type="SUPFAM" id="SSF53098">
    <property type="entry name" value="Ribonuclease H-like"/>
    <property type="match status" value="1"/>
</dbReference>
<name>ZMYM6_HUMAN</name>
<gene>
    <name type="primary">ZMYM6</name>
    <name type="synonym">Buster2</name>
    <name type="synonym">KIAA1353</name>
    <name type="synonym">ZNF258</name>
</gene>
<protein>
    <recommendedName>
        <fullName>Zinc finger MYM-type protein 6</fullName>
    </recommendedName>
    <alternativeName>
        <fullName>Transposon-derived Buster2 transposase-like protein</fullName>
    </alternativeName>
    <alternativeName>
        <fullName>Zinc finger protein 258</fullName>
    </alternativeName>
</protein>
<feature type="chain" id="PRO_0000191381" description="Zinc finger MYM-type protein 6">
    <location>
        <begin position="1"/>
        <end position="1325"/>
    </location>
</feature>
<feature type="zinc finger region" description="MYM-type 1">
    <location>
        <begin position="113"/>
        <end position="151"/>
    </location>
</feature>
<feature type="zinc finger region" description="MYM-type 2">
    <location>
        <begin position="163"/>
        <end position="206"/>
    </location>
</feature>
<feature type="zinc finger region" description="MYM-type 3">
    <location>
        <begin position="213"/>
        <end position="248"/>
    </location>
</feature>
<feature type="zinc finger region" description="MYM-type 4">
    <location>
        <begin position="296"/>
        <end position="334"/>
    </location>
</feature>
<feature type="zinc finger region" description="MYM-type 5">
    <location>
        <begin position="342"/>
        <end position="443"/>
    </location>
</feature>
<feature type="zinc finger region" description="MYM-type 6">
    <location>
        <begin position="451"/>
        <end position="485"/>
    </location>
</feature>
<feature type="zinc finger region" description="MYM-type 7">
    <location>
        <begin position="492"/>
        <end position="531"/>
    </location>
</feature>
<feature type="zinc finger region" description="MYM-type 8">
    <location>
        <begin position="538"/>
        <end position="572"/>
    </location>
</feature>
<feature type="region of interest" description="Disordered" evidence="1">
    <location>
        <begin position="665"/>
        <end position="733"/>
    </location>
</feature>
<feature type="compositionally biased region" description="Polar residues" evidence="1">
    <location>
        <begin position="695"/>
        <end position="706"/>
    </location>
</feature>
<feature type="modified residue" description="Phosphoserine" evidence="10">
    <location>
        <position position="397"/>
    </location>
</feature>
<feature type="splice variant" id="VSP_035287" description="In isoform 5." evidence="5">
    <location>
        <begin position="1"/>
        <end position="687"/>
    </location>
</feature>
<feature type="splice variant" id="VSP_034680" description="In isoform 4." evidence="6 7">
    <original>DILNPKDVITTRFENSYPSKDFCSQSC</original>
    <variation>YKILNIPFYFTFFLVCILFSSNILLIL</variation>
    <location>
        <begin position="144"/>
        <end position="170"/>
    </location>
</feature>
<feature type="splice variant" id="VSP_011446" description="In isoform 2." evidence="8">
    <original>DILNPKDVITTRF</original>
    <variation>YKILNIPFYFTFF</variation>
    <location>
        <begin position="144"/>
        <end position="156"/>
    </location>
</feature>
<feature type="splice variant" id="VSP_011447" description="In isoform 2." evidence="8">
    <location>
        <begin position="157"/>
        <end position="1325"/>
    </location>
</feature>
<feature type="splice variant" id="VSP_034681" description="In isoform 4." evidence="6 7">
    <location>
        <begin position="171"/>
        <end position="1325"/>
    </location>
</feature>
<feature type="splice variant" id="VSP_035288" description="In isoform 5." evidence="5">
    <original>NKGISCKPVTQTKATSCKPHTQHKECQT</original>
    <variation>MNFKYVGRYIKNIAYLFLKITVIQIFHS</variation>
    <location>
        <begin position="688"/>
        <end position="715"/>
    </location>
</feature>
<feature type="splice variant" id="VSP_034682" description="In isoform 1." evidence="4">
    <original>DLPMPNEK</original>
    <variation>ECPVRAVC</variation>
    <location>
        <begin position="716"/>
        <end position="723"/>
    </location>
</feature>
<feature type="splice variant" id="VSP_034683" description="In isoform 1." evidence="4">
    <location>
        <begin position="724"/>
        <end position="1325"/>
    </location>
</feature>
<feature type="sequence variant" id="VAR_044432" description="In dbSNP:rs10158256.">
    <original>K</original>
    <variation>R</variation>
    <location>
        <position position="660"/>
    </location>
</feature>
<feature type="sequence variant" id="VAR_044433" description="In dbSNP:rs16837147.">
    <original>E</original>
    <variation>K</variation>
    <location>
        <position position="1233"/>
    </location>
</feature>
<feature type="sequence conflict" description="In Ref. 7; AAI07881." evidence="9" ref="7">
    <original>S</original>
    <variation>G</variation>
    <location>
        <position position="44"/>
    </location>
</feature>
<feature type="sequence conflict" description="In Ref. 1; AAD15797." evidence="9" ref="1">
    <original>A</original>
    <variation>G</variation>
    <location>
        <position position="413"/>
    </location>
</feature>
<keyword id="KW-0025">Alternative splicing</keyword>
<keyword id="KW-0479">Metal-binding</keyword>
<keyword id="KW-0539">Nucleus</keyword>
<keyword id="KW-0597">Phosphoprotein</keyword>
<keyword id="KW-1267">Proteomics identification</keyword>
<keyword id="KW-1185">Reference proteome</keyword>
<keyword id="KW-0677">Repeat</keyword>
<keyword id="KW-0862">Zinc</keyword>
<keyword id="KW-0863">Zinc-finger</keyword>
<comment type="function">
    <text evidence="3">Plays a role in the regulation of cell morphology and cytoskeletal organization.</text>
</comment>
<comment type="interaction">
    <interactant intactId="EBI-2514645">
        <id>O95789</id>
    </interactant>
    <interactant intactId="EBI-748974">
        <id>Q96CV9</id>
        <label>OPTN</label>
    </interactant>
    <organismsDiffer>false</organismsDiffer>
    <experiments>2</experiments>
</comment>
<comment type="interaction">
    <interactant intactId="EBI-12949277">
        <id>O95789-4</id>
    </interactant>
    <interactant intactId="EBI-930964">
        <id>P54253</id>
        <label>ATXN1</label>
    </interactant>
    <organismsDiffer>false</organismsDiffer>
    <experiments>6</experiments>
</comment>
<comment type="interaction">
    <interactant intactId="EBI-12949277">
        <id>O95789-4</id>
    </interactant>
    <interactant intactId="EBI-11524452">
        <id>Q8N9N5-2</id>
        <label>BANP</label>
    </interactant>
    <organismsDiffer>false</organismsDiffer>
    <experiments>3</experiments>
</comment>
<comment type="interaction">
    <interactant intactId="EBI-12949277">
        <id>O95789-4</id>
    </interactant>
    <interactant intactId="EBI-954079">
        <id>Q8NDZ0</id>
        <label>BEND2</label>
    </interactant>
    <organismsDiffer>false</organismsDiffer>
    <experiments>3</experiments>
</comment>
<comment type="interaction">
    <interactant intactId="EBI-12949277">
        <id>O95789-4</id>
    </interactant>
    <interactant intactId="EBI-932887">
        <id>P49711</id>
        <label>CTCF</label>
    </interactant>
    <organismsDiffer>false</organismsDiffer>
    <experiments>3</experiments>
</comment>
<comment type="interaction">
    <interactant intactId="EBI-12949277">
        <id>O95789-4</id>
    </interactant>
    <interactant intactId="EBI-9641086">
        <id>P21333-2</id>
        <label>FLNA</label>
    </interactant>
    <organismsDiffer>false</organismsDiffer>
    <experiments>3</experiments>
</comment>
<comment type="interaction">
    <interactant intactId="EBI-12949277">
        <id>O95789-4</id>
    </interactant>
    <interactant intactId="EBI-466029">
        <id>P42858</id>
        <label>HTT</label>
    </interactant>
    <organismsDiffer>false</organismsDiffer>
    <experiments>3</experiments>
</comment>
<comment type="interaction">
    <interactant intactId="EBI-12949277">
        <id>O95789-4</id>
    </interactant>
    <interactant intactId="EBI-1050743">
        <id>P31153</id>
        <label>MAT2A</label>
    </interactant>
    <organismsDiffer>false</organismsDiffer>
    <experiments>3</experiments>
</comment>
<comment type="interaction">
    <interactant intactId="EBI-12949277">
        <id>O95789-4</id>
    </interactant>
    <interactant intactId="EBI-11956831">
        <id>Q13952-2</id>
        <label>NFYC</label>
    </interactant>
    <organismsDiffer>false</organismsDiffer>
    <experiments>3</experiments>
</comment>
<comment type="interaction">
    <interactant intactId="EBI-12949277">
        <id>O95789-4</id>
    </interactant>
    <interactant intactId="EBI-11742836">
        <id>Q16656-4</id>
        <label>NRF1</label>
    </interactant>
    <organismsDiffer>false</organismsDiffer>
    <experiments>3</experiments>
</comment>
<comment type="interaction">
    <interactant intactId="EBI-12949277">
        <id>O95789-4</id>
    </interactant>
    <interactant intactId="EBI-473160">
        <id>Q8N2W9</id>
        <label>PIAS4</label>
    </interactant>
    <organismsDiffer>false</organismsDiffer>
    <experiments>3</experiments>
</comment>
<comment type="interaction">
    <interactant intactId="EBI-12949277">
        <id>O95789-4</id>
    </interactant>
    <interactant intactId="EBI-50433196">
        <id>A0A6Q8PF08</id>
        <label>PMP22</label>
    </interactant>
    <organismsDiffer>false</organismsDiffer>
    <experiments>3</experiments>
</comment>
<comment type="interaction">
    <interactant intactId="EBI-12949277">
        <id>O95789-4</id>
    </interactant>
    <interactant intactId="EBI-11526590">
        <id>P14859-6</id>
        <label>POU2F1</label>
    </interactant>
    <organismsDiffer>false</organismsDiffer>
    <experiments>3</experiments>
</comment>
<comment type="interaction">
    <interactant intactId="EBI-12949277">
        <id>O95789-4</id>
    </interactant>
    <interactant intactId="EBI-990792">
        <id>P00441</id>
        <label>SOD1</label>
    </interactant>
    <organismsDiffer>false</organismsDiffer>
    <experiments>3</experiments>
</comment>
<comment type="interaction">
    <interactant intactId="EBI-12949277">
        <id>O95789-4</id>
    </interactant>
    <interactant intactId="EBI-3956833">
        <id>P17752</id>
        <label>TPH1</label>
    </interactant>
    <organismsDiffer>false</organismsDiffer>
    <experiments>3</experiments>
</comment>
<comment type="interaction">
    <interactant intactId="EBI-12949277">
        <id>O95789-4</id>
    </interactant>
    <interactant intactId="EBI-744471">
        <id>O43167</id>
        <label>ZBTB24</label>
    </interactant>
    <organismsDiffer>false</organismsDiffer>
    <experiments>3</experiments>
</comment>
<comment type="interaction">
    <interactant intactId="EBI-12949277">
        <id>O95789-4</id>
    </interactant>
    <interactant intactId="EBI-7254550">
        <id>P36508</id>
        <label>ZNF76</label>
    </interactant>
    <organismsDiffer>false</organismsDiffer>
    <experiments>3</experiments>
</comment>
<comment type="subcellular location">
    <subcellularLocation>
        <location evidence="9">Nucleus</location>
    </subcellularLocation>
</comment>
<comment type="alternative products">
    <event type="alternative splicing"/>
    <isoform>
        <id>O95789-3</id>
        <name>3</name>
        <sequence type="displayed"/>
    </isoform>
    <isoform>
        <id>O95789-2</id>
        <name>2</name>
        <sequence type="described" ref="VSP_011446 VSP_011447"/>
    </isoform>
    <isoform>
        <id>O95789-1</id>
        <name>1</name>
        <sequence type="described" ref="VSP_034682 VSP_034683"/>
    </isoform>
    <isoform>
        <id>O95789-4</id>
        <name>4</name>
        <sequence type="described" ref="VSP_034680 VSP_034681"/>
    </isoform>
    <isoform>
        <id>O95789-5</id>
        <name>5</name>
        <sequence type="described" ref="VSP_035287 VSP_035288"/>
    </isoform>
</comment>
<comment type="tissue specificity">
    <text evidence="2">Expressed at high levels in heart, skeletal muscle, kidney and liver.</text>
</comment>
<comment type="sequence caution" evidence="9">
    <conflict type="miscellaneous discrepancy">
        <sequence resource="EMBL-CDS" id="AAH33903"/>
    </conflict>
    <text>Contaminating sequence. Potential poly-A sequence.</text>
</comment>
<comment type="sequence caution" evidence="9">
    <conflict type="miscellaneous discrepancy">
        <sequence resource="EMBL-CDS" id="AAI07881"/>
    </conflict>
    <text>Contaminating sequence. Potential poly-A sequence.</text>
</comment>
<comment type="sequence caution" evidence="9">
    <conflict type="erroneous initiation">
        <sequence resource="EMBL-CDS" id="BAA92591"/>
    </conflict>
    <text>Extended N-terminus.</text>
</comment>
<proteinExistence type="evidence at protein level"/>